<comment type="function">
    <text evidence="1">Catalyzes the attachment of serine to tRNA(Ser). Is also able to aminoacylate tRNA(Sec) with serine, to form the misacylated tRNA L-seryl-tRNA(Sec), which will be further converted into selenocysteinyl-tRNA(Sec).</text>
</comment>
<comment type="catalytic activity">
    <reaction evidence="1">
        <text>tRNA(Ser) + L-serine + ATP = L-seryl-tRNA(Ser) + AMP + diphosphate + H(+)</text>
        <dbReference type="Rhea" id="RHEA:12292"/>
        <dbReference type="Rhea" id="RHEA-COMP:9669"/>
        <dbReference type="Rhea" id="RHEA-COMP:9703"/>
        <dbReference type="ChEBI" id="CHEBI:15378"/>
        <dbReference type="ChEBI" id="CHEBI:30616"/>
        <dbReference type="ChEBI" id="CHEBI:33019"/>
        <dbReference type="ChEBI" id="CHEBI:33384"/>
        <dbReference type="ChEBI" id="CHEBI:78442"/>
        <dbReference type="ChEBI" id="CHEBI:78533"/>
        <dbReference type="ChEBI" id="CHEBI:456215"/>
        <dbReference type="EC" id="6.1.1.11"/>
    </reaction>
</comment>
<comment type="catalytic activity">
    <reaction evidence="1">
        <text>tRNA(Sec) + L-serine + ATP = L-seryl-tRNA(Sec) + AMP + diphosphate + H(+)</text>
        <dbReference type="Rhea" id="RHEA:42580"/>
        <dbReference type="Rhea" id="RHEA-COMP:9742"/>
        <dbReference type="Rhea" id="RHEA-COMP:10128"/>
        <dbReference type="ChEBI" id="CHEBI:15378"/>
        <dbReference type="ChEBI" id="CHEBI:30616"/>
        <dbReference type="ChEBI" id="CHEBI:33019"/>
        <dbReference type="ChEBI" id="CHEBI:33384"/>
        <dbReference type="ChEBI" id="CHEBI:78442"/>
        <dbReference type="ChEBI" id="CHEBI:78533"/>
        <dbReference type="ChEBI" id="CHEBI:456215"/>
        <dbReference type="EC" id="6.1.1.11"/>
    </reaction>
</comment>
<comment type="pathway">
    <text evidence="1">Aminoacyl-tRNA biosynthesis; selenocysteinyl-tRNA(Sec) biosynthesis; L-seryl-tRNA(Sec) from L-serine and tRNA(Sec): step 1/1.</text>
</comment>
<comment type="subunit">
    <text evidence="1">Homodimer. The tRNA molecule binds across the dimer.</text>
</comment>
<comment type="subcellular location">
    <subcellularLocation>
        <location evidence="1">Cytoplasm</location>
    </subcellularLocation>
</comment>
<comment type="domain">
    <text evidence="1">Consists of two distinct domains, a catalytic core and a N-terminal extension that is involved in tRNA binding.</text>
</comment>
<comment type="similarity">
    <text evidence="1">Belongs to the class-II aminoacyl-tRNA synthetase family. Type-1 seryl-tRNA synthetase subfamily.</text>
</comment>
<dbReference type="EC" id="6.1.1.11" evidence="1"/>
<dbReference type="EMBL" id="FM204883">
    <property type="protein sequence ID" value="CAW92703.1"/>
    <property type="molecule type" value="Genomic_DNA"/>
</dbReference>
<dbReference type="RefSeq" id="WP_012679085.1">
    <property type="nucleotide sequence ID" value="NC_012471.1"/>
</dbReference>
<dbReference type="SMR" id="C0M858"/>
<dbReference type="KEGG" id="seu:SEQ_0489"/>
<dbReference type="HOGENOM" id="CLU_023797_1_1_9"/>
<dbReference type="OrthoDB" id="9804647at2"/>
<dbReference type="UniPathway" id="UPA00906">
    <property type="reaction ID" value="UER00895"/>
</dbReference>
<dbReference type="Proteomes" id="UP000001365">
    <property type="component" value="Chromosome"/>
</dbReference>
<dbReference type="GO" id="GO:0005737">
    <property type="term" value="C:cytoplasm"/>
    <property type="evidence" value="ECO:0007669"/>
    <property type="project" value="UniProtKB-SubCell"/>
</dbReference>
<dbReference type="GO" id="GO:0005524">
    <property type="term" value="F:ATP binding"/>
    <property type="evidence" value="ECO:0007669"/>
    <property type="project" value="UniProtKB-UniRule"/>
</dbReference>
<dbReference type="GO" id="GO:0140096">
    <property type="term" value="F:catalytic activity, acting on a protein"/>
    <property type="evidence" value="ECO:0007669"/>
    <property type="project" value="UniProtKB-ARBA"/>
</dbReference>
<dbReference type="GO" id="GO:0004828">
    <property type="term" value="F:serine-tRNA ligase activity"/>
    <property type="evidence" value="ECO:0007669"/>
    <property type="project" value="UniProtKB-UniRule"/>
</dbReference>
<dbReference type="GO" id="GO:0016740">
    <property type="term" value="F:transferase activity"/>
    <property type="evidence" value="ECO:0007669"/>
    <property type="project" value="UniProtKB-ARBA"/>
</dbReference>
<dbReference type="GO" id="GO:0016260">
    <property type="term" value="P:selenocysteine biosynthetic process"/>
    <property type="evidence" value="ECO:0007669"/>
    <property type="project" value="UniProtKB-UniRule"/>
</dbReference>
<dbReference type="GO" id="GO:0006434">
    <property type="term" value="P:seryl-tRNA aminoacylation"/>
    <property type="evidence" value="ECO:0007669"/>
    <property type="project" value="UniProtKB-UniRule"/>
</dbReference>
<dbReference type="CDD" id="cd00770">
    <property type="entry name" value="SerRS_core"/>
    <property type="match status" value="1"/>
</dbReference>
<dbReference type="Gene3D" id="3.30.930.10">
    <property type="entry name" value="Bira Bifunctional Protein, Domain 2"/>
    <property type="match status" value="1"/>
</dbReference>
<dbReference type="Gene3D" id="1.10.287.40">
    <property type="entry name" value="Serine-tRNA synthetase, tRNA binding domain"/>
    <property type="match status" value="1"/>
</dbReference>
<dbReference type="HAMAP" id="MF_00176">
    <property type="entry name" value="Ser_tRNA_synth_type1"/>
    <property type="match status" value="1"/>
</dbReference>
<dbReference type="InterPro" id="IPR002314">
    <property type="entry name" value="aa-tRNA-synt_IIb"/>
</dbReference>
<dbReference type="InterPro" id="IPR006195">
    <property type="entry name" value="aa-tRNA-synth_II"/>
</dbReference>
<dbReference type="InterPro" id="IPR045864">
    <property type="entry name" value="aa-tRNA-synth_II/BPL/LPL"/>
</dbReference>
<dbReference type="InterPro" id="IPR002317">
    <property type="entry name" value="Ser-tRNA-ligase_type_1"/>
</dbReference>
<dbReference type="InterPro" id="IPR015866">
    <property type="entry name" value="Ser-tRNA-synth_1_N"/>
</dbReference>
<dbReference type="InterPro" id="IPR042103">
    <property type="entry name" value="SerRS_1_N_sf"/>
</dbReference>
<dbReference type="InterPro" id="IPR033729">
    <property type="entry name" value="SerRS_core"/>
</dbReference>
<dbReference type="InterPro" id="IPR010978">
    <property type="entry name" value="tRNA-bd_arm"/>
</dbReference>
<dbReference type="NCBIfam" id="TIGR00414">
    <property type="entry name" value="serS"/>
    <property type="match status" value="1"/>
</dbReference>
<dbReference type="PANTHER" id="PTHR43697:SF1">
    <property type="entry name" value="SERINE--TRNA LIGASE"/>
    <property type="match status" value="1"/>
</dbReference>
<dbReference type="PANTHER" id="PTHR43697">
    <property type="entry name" value="SERYL-TRNA SYNTHETASE"/>
    <property type="match status" value="1"/>
</dbReference>
<dbReference type="Pfam" id="PF02403">
    <property type="entry name" value="Seryl_tRNA_N"/>
    <property type="match status" value="1"/>
</dbReference>
<dbReference type="Pfam" id="PF00587">
    <property type="entry name" value="tRNA-synt_2b"/>
    <property type="match status" value="1"/>
</dbReference>
<dbReference type="PIRSF" id="PIRSF001529">
    <property type="entry name" value="Ser-tRNA-synth_IIa"/>
    <property type="match status" value="1"/>
</dbReference>
<dbReference type="PRINTS" id="PR00981">
    <property type="entry name" value="TRNASYNTHSER"/>
</dbReference>
<dbReference type="SUPFAM" id="SSF55681">
    <property type="entry name" value="Class II aaRS and biotin synthetases"/>
    <property type="match status" value="1"/>
</dbReference>
<dbReference type="SUPFAM" id="SSF46589">
    <property type="entry name" value="tRNA-binding arm"/>
    <property type="match status" value="1"/>
</dbReference>
<dbReference type="PROSITE" id="PS50862">
    <property type="entry name" value="AA_TRNA_LIGASE_II"/>
    <property type="match status" value="1"/>
</dbReference>
<accession>C0M858</accession>
<proteinExistence type="inferred from homology"/>
<gene>
    <name evidence="1" type="primary">serS</name>
    <name type="ordered locus">SEQ_0489</name>
</gene>
<protein>
    <recommendedName>
        <fullName evidence="1">Serine--tRNA ligase</fullName>
        <ecNumber evidence="1">6.1.1.11</ecNumber>
    </recommendedName>
    <alternativeName>
        <fullName evidence="1">Seryl-tRNA synthetase</fullName>
        <shortName evidence="1">SerRS</shortName>
    </alternativeName>
    <alternativeName>
        <fullName evidence="1">Seryl-tRNA(Ser/Sec) synthetase</fullName>
    </alternativeName>
</protein>
<organism>
    <name type="scientific">Streptococcus equi subsp. equi (strain 4047)</name>
    <dbReference type="NCBI Taxonomy" id="553482"/>
    <lineage>
        <taxon>Bacteria</taxon>
        <taxon>Bacillati</taxon>
        <taxon>Bacillota</taxon>
        <taxon>Bacilli</taxon>
        <taxon>Lactobacillales</taxon>
        <taxon>Streptococcaceae</taxon>
        <taxon>Streptococcus</taxon>
    </lineage>
</organism>
<reference key="1">
    <citation type="journal article" date="2009" name="PLoS Pathog.">
        <title>Genomic evidence for the evolution of Streptococcus equi: host restriction, increased virulence, and genetic exchange with human pathogens.</title>
        <authorList>
            <person name="Holden M.T.G."/>
            <person name="Heather Z."/>
            <person name="Paillot R."/>
            <person name="Steward K.F."/>
            <person name="Webb K."/>
            <person name="Ainslie F."/>
            <person name="Jourdan T."/>
            <person name="Bason N.C."/>
            <person name="Holroyd N.E."/>
            <person name="Mungall K."/>
            <person name="Quail M.A."/>
            <person name="Sanders M."/>
            <person name="Simmonds M."/>
            <person name="Willey D."/>
            <person name="Brooks K."/>
            <person name="Aanensen D.M."/>
            <person name="Spratt B.G."/>
            <person name="Jolley K.A."/>
            <person name="Maiden M.C.J."/>
            <person name="Kehoe M."/>
            <person name="Chanter N."/>
            <person name="Bentley S.D."/>
            <person name="Robinson C."/>
            <person name="Maskell D.J."/>
            <person name="Parkhill J."/>
            <person name="Waller A.S."/>
        </authorList>
    </citation>
    <scope>NUCLEOTIDE SEQUENCE [LARGE SCALE GENOMIC DNA]</scope>
    <source>
        <strain>4047</strain>
    </source>
</reference>
<feature type="chain" id="PRO_1000199505" description="Serine--tRNA ligase">
    <location>
        <begin position="1"/>
        <end position="425"/>
    </location>
</feature>
<feature type="binding site" evidence="1">
    <location>
        <begin position="230"/>
        <end position="232"/>
    </location>
    <ligand>
        <name>L-serine</name>
        <dbReference type="ChEBI" id="CHEBI:33384"/>
    </ligand>
</feature>
<feature type="binding site" evidence="1">
    <location>
        <begin position="261"/>
        <end position="263"/>
    </location>
    <ligand>
        <name>ATP</name>
        <dbReference type="ChEBI" id="CHEBI:30616"/>
    </ligand>
</feature>
<feature type="binding site" evidence="1">
    <location>
        <position position="284"/>
    </location>
    <ligand>
        <name>L-serine</name>
        <dbReference type="ChEBI" id="CHEBI:33384"/>
    </ligand>
</feature>
<feature type="binding site" evidence="1">
    <location>
        <begin position="348"/>
        <end position="351"/>
    </location>
    <ligand>
        <name>ATP</name>
        <dbReference type="ChEBI" id="CHEBI:30616"/>
    </ligand>
</feature>
<feature type="binding site" evidence="1">
    <location>
        <position position="384"/>
    </location>
    <ligand>
        <name>L-serine</name>
        <dbReference type="ChEBI" id="CHEBI:33384"/>
    </ligand>
</feature>
<keyword id="KW-0030">Aminoacyl-tRNA synthetase</keyword>
<keyword id="KW-0067">ATP-binding</keyword>
<keyword id="KW-0963">Cytoplasm</keyword>
<keyword id="KW-0436">Ligase</keyword>
<keyword id="KW-0547">Nucleotide-binding</keyword>
<keyword id="KW-0648">Protein biosynthesis</keyword>
<name>SYS_STRE4</name>
<sequence>MLDLKRIRTDFDTVAAKLKTRGVSEAILTSLKALDEQRRTLLVQTEELKAQRNIASAAIAQAKRQKEDASQQIADMQQLAANIKAIDAKLADIDQEITGIITVLPNTPHDSVPIGADEEDNVEIHRWGKPRQFDFDIKAHWDLGEALDILDWERGAKVTGARFLFYKNLGARLERALYNFMLDEHLKEGYQEIIPPYMVNHDSMFGTGQYPKFKEDTFELDGTNFVLIPTAEVPLTNYYRGDIIDGKELPIYFTAMSPSFRSEAGSAGRDTRGLIRLHQFHKVEMVKFAKPETSYEELEKMTANAEHILQKLKLPYRVLALCTGDMGFSAAKTYDLEVWIPAQNTYREISSCSNTEDFQARRAQIRYRDEADGKVKLLHTLNGSGLAVGRTVAAILENYQNEDGSVTIPEVLRPYMGGLEVIKPR</sequence>
<evidence type="ECO:0000255" key="1">
    <source>
        <dbReference type="HAMAP-Rule" id="MF_00176"/>
    </source>
</evidence>